<comment type="function">
    <text evidence="1">This is one of the proteins that bind and probably mediate the attachment of the 5S RNA into the large ribosomal subunit, where it forms part of the central protuberance.</text>
</comment>
<comment type="subunit">
    <text evidence="1">Part of the 50S ribosomal subunit; part of the 5S rRNA/L5/L18/L25 subcomplex. Contacts the 5S and 23S rRNAs.</text>
</comment>
<comment type="similarity">
    <text evidence="1">Belongs to the universal ribosomal protein uL18 family.</text>
</comment>
<keyword id="KW-1185">Reference proteome</keyword>
<keyword id="KW-0687">Ribonucleoprotein</keyword>
<keyword id="KW-0689">Ribosomal protein</keyword>
<keyword id="KW-0694">RNA-binding</keyword>
<keyword id="KW-0699">rRNA-binding</keyword>
<sequence length="117" mass="13055">MNLSRNKARKVKQKRLRAKSELSRAASKPRLSVFKSHANFYAQLIDDQKRVTLASVSSLKSGKYGGNVAAAKELGLLMGQKILDLKLETVAFDRNGYLYHGRVKAFADAVREKGVKF</sequence>
<dbReference type="EMBL" id="AE017245">
    <property type="protein sequence ID" value="AAZ44034.2"/>
    <property type="molecule type" value="Genomic_DNA"/>
</dbReference>
<dbReference type="RefSeq" id="WP_041352129.1">
    <property type="nucleotide sequence ID" value="NC_007294.1"/>
</dbReference>
<dbReference type="SMR" id="Q4A5D7"/>
<dbReference type="STRING" id="262723.MS53_0627"/>
<dbReference type="KEGG" id="msy:MS53_0627"/>
<dbReference type="eggNOG" id="COG0256">
    <property type="taxonomic scope" value="Bacteria"/>
</dbReference>
<dbReference type="HOGENOM" id="CLU_098841_0_1_14"/>
<dbReference type="OrthoDB" id="9810939at2"/>
<dbReference type="Proteomes" id="UP000000549">
    <property type="component" value="Chromosome"/>
</dbReference>
<dbReference type="GO" id="GO:0022625">
    <property type="term" value="C:cytosolic large ribosomal subunit"/>
    <property type="evidence" value="ECO:0007669"/>
    <property type="project" value="TreeGrafter"/>
</dbReference>
<dbReference type="GO" id="GO:0008097">
    <property type="term" value="F:5S rRNA binding"/>
    <property type="evidence" value="ECO:0007669"/>
    <property type="project" value="TreeGrafter"/>
</dbReference>
<dbReference type="GO" id="GO:0003735">
    <property type="term" value="F:structural constituent of ribosome"/>
    <property type="evidence" value="ECO:0007669"/>
    <property type="project" value="InterPro"/>
</dbReference>
<dbReference type="GO" id="GO:0006412">
    <property type="term" value="P:translation"/>
    <property type="evidence" value="ECO:0007669"/>
    <property type="project" value="UniProtKB-UniRule"/>
</dbReference>
<dbReference type="CDD" id="cd00432">
    <property type="entry name" value="Ribosomal_L18_L5e"/>
    <property type="match status" value="1"/>
</dbReference>
<dbReference type="Gene3D" id="3.30.420.100">
    <property type="match status" value="1"/>
</dbReference>
<dbReference type="HAMAP" id="MF_01337_B">
    <property type="entry name" value="Ribosomal_uL18_B"/>
    <property type="match status" value="1"/>
</dbReference>
<dbReference type="InterPro" id="IPR004389">
    <property type="entry name" value="Ribosomal_uL18_bac-type"/>
</dbReference>
<dbReference type="InterPro" id="IPR005484">
    <property type="entry name" value="Ribosomal_uL18_bac/euk"/>
</dbReference>
<dbReference type="NCBIfam" id="TIGR00060">
    <property type="entry name" value="L18_bact"/>
    <property type="match status" value="1"/>
</dbReference>
<dbReference type="PANTHER" id="PTHR12899">
    <property type="entry name" value="39S RIBOSOMAL PROTEIN L18, MITOCHONDRIAL"/>
    <property type="match status" value="1"/>
</dbReference>
<dbReference type="PANTHER" id="PTHR12899:SF3">
    <property type="entry name" value="LARGE RIBOSOMAL SUBUNIT PROTEIN UL18M"/>
    <property type="match status" value="1"/>
</dbReference>
<dbReference type="Pfam" id="PF00861">
    <property type="entry name" value="Ribosomal_L18p"/>
    <property type="match status" value="1"/>
</dbReference>
<dbReference type="SUPFAM" id="SSF53137">
    <property type="entry name" value="Translational machinery components"/>
    <property type="match status" value="1"/>
</dbReference>
<name>RL18_MYCS5</name>
<organism>
    <name type="scientific">Mycoplasmopsis synoviae (strain 53)</name>
    <name type="common">Mycoplasma synoviae</name>
    <dbReference type="NCBI Taxonomy" id="262723"/>
    <lineage>
        <taxon>Bacteria</taxon>
        <taxon>Bacillati</taxon>
        <taxon>Mycoplasmatota</taxon>
        <taxon>Mycoplasmoidales</taxon>
        <taxon>Metamycoplasmataceae</taxon>
        <taxon>Mycoplasmopsis</taxon>
    </lineage>
</organism>
<gene>
    <name evidence="1" type="primary">rplR</name>
    <name type="ordered locus">MS53_0627</name>
</gene>
<proteinExistence type="inferred from homology"/>
<evidence type="ECO:0000255" key="1">
    <source>
        <dbReference type="HAMAP-Rule" id="MF_01337"/>
    </source>
</evidence>
<evidence type="ECO:0000256" key="2">
    <source>
        <dbReference type="SAM" id="MobiDB-lite"/>
    </source>
</evidence>
<evidence type="ECO:0000305" key="3"/>
<accession>Q4A5D7</accession>
<feature type="chain" id="PRO_0000251332" description="Large ribosomal subunit protein uL18">
    <location>
        <begin position="1"/>
        <end position="117"/>
    </location>
</feature>
<feature type="region of interest" description="Disordered" evidence="2">
    <location>
        <begin position="1"/>
        <end position="23"/>
    </location>
</feature>
<feature type="compositionally biased region" description="Basic residues" evidence="2">
    <location>
        <begin position="1"/>
        <end position="17"/>
    </location>
</feature>
<reference key="1">
    <citation type="journal article" date="2005" name="J. Bacteriol.">
        <title>Swine and poultry pathogens: the complete genome sequences of two strains of Mycoplasma hyopneumoniae and a strain of Mycoplasma synoviae.</title>
        <authorList>
            <person name="Vasconcelos A.T.R."/>
            <person name="Ferreira H.B."/>
            <person name="Bizarro C.V."/>
            <person name="Bonatto S.L."/>
            <person name="Carvalho M.O."/>
            <person name="Pinto P.M."/>
            <person name="Almeida D.F."/>
            <person name="Almeida L.G.P."/>
            <person name="Almeida R."/>
            <person name="Alves-Junior L."/>
            <person name="Assuncao E.N."/>
            <person name="Azevedo V.A.C."/>
            <person name="Bogo M.R."/>
            <person name="Brigido M.M."/>
            <person name="Brocchi M."/>
            <person name="Burity H.A."/>
            <person name="Camargo A.A."/>
            <person name="Camargo S.S."/>
            <person name="Carepo M.S."/>
            <person name="Carraro D.M."/>
            <person name="de Mattos Cascardo J.C."/>
            <person name="Castro L.A."/>
            <person name="Cavalcanti G."/>
            <person name="Chemale G."/>
            <person name="Collevatti R.G."/>
            <person name="Cunha C.W."/>
            <person name="Dallagiovanna B."/>
            <person name="Dambros B.P."/>
            <person name="Dellagostin O.A."/>
            <person name="Falcao C."/>
            <person name="Fantinatti-Garboggini F."/>
            <person name="Felipe M.S.S."/>
            <person name="Fiorentin L."/>
            <person name="Franco G.R."/>
            <person name="Freitas N.S.A."/>
            <person name="Frias D."/>
            <person name="Grangeiro T.B."/>
            <person name="Grisard E.C."/>
            <person name="Guimaraes C.T."/>
            <person name="Hungria M."/>
            <person name="Jardim S.N."/>
            <person name="Krieger M.A."/>
            <person name="Laurino J.P."/>
            <person name="Lima L.F.A."/>
            <person name="Lopes M.I."/>
            <person name="Loreto E.L.S."/>
            <person name="Madeira H.M.F."/>
            <person name="Manfio G.P."/>
            <person name="Maranhao A.Q."/>
            <person name="Martinkovics C.T."/>
            <person name="Medeiros S.R.B."/>
            <person name="Moreira M.A.M."/>
            <person name="Neiva M."/>
            <person name="Ramalho-Neto C.E."/>
            <person name="Nicolas M.F."/>
            <person name="Oliveira S.C."/>
            <person name="Paixao R.F.C."/>
            <person name="Pedrosa F.O."/>
            <person name="Pena S.D.J."/>
            <person name="Pereira M."/>
            <person name="Pereira-Ferrari L."/>
            <person name="Piffer I."/>
            <person name="Pinto L.S."/>
            <person name="Potrich D.P."/>
            <person name="Salim A.C.M."/>
            <person name="Santos F.R."/>
            <person name="Schmitt R."/>
            <person name="Schneider M.P.C."/>
            <person name="Schrank A."/>
            <person name="Schrank I.S."/>
            <person name="Schuck A.F."/>
            <person name="Seuanez H.N."/>
            <person name="Silva D.W."/>
            <person name="Silva R."/>
            <person name="Silva S.C."/>
            <person name="Soares C.M.A."/>
            <person name="Souza K.R.L."/>
            <person name="Souza R.C."/>
            <person name="Staats C.C."/>
            <person name="Steffens M.B.R."/>
            <person name="Teixeira S.M.R."/>
            <person name="Urmenyi T.P."/>
            <person name="Vainstein M.H."/>
            <person name="Zuccherato L.W."/>
            <person name="Simpson A.J.G."/>
            <person name="Zaha A."/>
        </authorList>
    </citation>
    <scope>NUCLEOTIDE SEQUENCE [LARGE SCALE GENOMIC DNA]</scope>
    <source>
        <strain>53</strain>
    </source>
</reference>
<protein>
    <recommendedName>
        <fullName evidence="1">Large ribosomal subunit protein uL18</fullName>
    </recommendedName>
    <alternativeName>
        <fullName evidence="3">50S ribosomal protein L18</fullName>
    </alternativeName>
</protein>